<sequence>MSMQDPVADMLTRIRNGQLANKYSVKMPSSKLKKSIIQLLKEEGYIKDYNVTGDTKLELEVFLKYFQGKSVVDMIQRISRPSLRIYKNKNNLPKVMSGLGIAVISTSKGVMTDRMARQEGLGGEVICYVA</sequence>
<name>RS8_BUCAI</name>
<accession>P57577</accession>
<protein>
    <recommendedName>
        <fullName evidence="1">Small ribosomal subunit protein uS8</fullName>
    </recommendedName>
    <alternativeName>
        <fullName evidence="2">30S ribosomal protein S8</fullName>
    </alternativeName>
</protein>
<reference key="1">
    <citation type="journal article" date="2000" name="Nature">
        <title>Genome sequence of the endocellular bacterial symbiont of aphids Buchnera sp. APS.</title>
        <authorList>
            <person name="Shigenobu S."/>
            <person name="Watanabe H."/>
            <person name="Hattori M."/>
            <person name="Sakaki Y."/>
            <person name="Ishikawa H."/>
        </authorList>
    </citation>
    <scope>NUCLEOTIDE SEQUENCE [LARGE SCALE GENOMIC DNA]</scope>
    <source>
        <strain>APS</strain>
    </source>
</reference>
<comment type="function">
    <text evidence="1">One of the primary rRNA binding proteins, it binds directly to 16S rRNA central domain where it helps coordinate assembly of the platform of the 30S subunit.</text>
</comment>
<comment type="subunit">
    <text evidence="1">Part of the 30S ribosomal subunit. Contacts proteins S5 and S12.</text>
</comment>
<comment type="similarity">
    <text evidence="1">Belongs to the universal ribosomal protein uS8 family.</text>
</comment>
<evidence type="ECO:0000255" key="1">
    <source>
        <dbReference type="HAMAP-Rule" id="MF_01302"/>
    </source>
</evidence>
<evidence type="ECO:0000305" key="2"/>
<keyword id="KW-1185">Reference proteome</keyword>
<keyword id="KW-0687">Ribonucleoprotein</keyword>
<keyword id="KW-0689">Ribosomal protein</keyword>
<keyword id="KW-0694">RNA-binding</keyword>
<keyword id="KW-0699">rRNA-binding</keyword>
<gene>
    <name evidence="1" type="primary">rpsH</name>
    <name type="ordered locus">BU510</name>
</gene>
<proteinExistence type="inferred from homology"/>
<feature type="chain" id="PRO_0000126380" description="Small ribosomal subunit protein uS8">
    <location>
        <begin position="1"/>
        <end position="130"/>
    </location>
</feature>
<organism>
    <name type="scientific">Buchnera aphidicola subsp. Acyrthosiphon pisum (strain APS)</name>
    <name type="common">Acyrthosiphon pisum symbiotic bacterium</name>
    <dbReference type="NCBI Taxonomy" id="107806"/>
    <lineage>
        <taxon>Bacteria</taxon>
        <taxon>Pseudomonadati</taxon>
        <taxon>Pseudomonadota</taxon>
        <taxon>Gammaproteobacteria</taxon>
        <taxon>Enterobacterales</taxon>
        <taxon>Erwiniaceae</taxon>
        <taxon>Buchnera</taxon>
    </lineage>
</organism>
<dbReference type="EMBL" id="BA000003">
    <property type="protein sequence ID" value="BAB13203.1"/>
    <property type="molecule type" value="Genomic_DNA"/>
</dbReference>
<dbReference type="RefSeq" id="NP_240317.1">
    <property type="nucleotide sequence ID" value="NC_002528.1"/>
</dbReference>
<dbReference type="RefSeq" id="WP_009874461.1">
    <property type="nucleotide sequence ID" value="NZ_AP036055.1"/>
</dbReference>
<dbReference type="SMR" id="P57577"/>
<dbReference type="STRING" id="563178.BUAP5A_503"/>
<dbReference type="EnsemblBacteria" id="BAB13203">
    <property type="protein sequence ID" value="BAB13203"/>
    <property type="gene ID" value="BAB13203"/>
</dbReference>
<dbReference type="KEGG" id="buc:BU510"/>
<dbReference type="PATRIC" id="fig|107806.10.peg.515"/>
<dbReference type="eggNOG" id="COG0096">
    <property type="taxonomic scope" value="Bacteria"/>
</dbReference>
<dbReference type="HOGENOM" id="CLU_098428_0_0_6"/>
<dbReference type="Proteomes" id="UP000001806">
    <property type="component" value="Chromosome"/>
</dbReference>
<dbReference type="GO" id="GO:1990904">
    <property type="term" value="C:ribonucleoprotein complex"/>
    <property type="evidence" value="ECO:0007669"/>
    <property type="project" value="UniProtKB-KW"/>
</dbReference>
<dbReference type="GO" id="GO:0005840">
    <property type="term" value="C:ribosome"/>
    <property type="evidence" value="ECO:0007669"/>
    <property type="project" value="UniProtKB-KW"/>
</dbReference>
<dbReference type="GO" id="GO:0019843">
    <property type="term" value="F:rRNA binding"/>
    <property type="evidence" value="ECO:0007669"/>
    <property type="project" value="UniProtKB-UniRule"/>
</dbReference>
<dbReference type="GO" id="GO:0003735">
    <property type="term" value="F:structural constituent of ribosome"/>
    <property type="evidence" value="ECO:0007669"/>
    <property type="project" value="InterPro"/>
</dbReference>
<dbReference type="GO" id="GO:0006412">
    <property type="term" value="P:translation"/>
    <property type="evidence" value="ECO:0007669"/>
    <property type="project" value="UniProtKB-UniRule"/>
</dbReference>
<dbReference type="FunFam" id="3.30.1370.30:FF:000003">
    <property type="entry name" value="30S ribosomal protein S8"/>
    <property type="match status" value="1"/>
</dbReference>
<dbReference type="FunFam" id="3.30.1490.10:FF:000001">
    <property type="entry name" value="30S ribosomal protein S8"/>
    <property type="match status" value="1"/>
</dbReference>
<dbReference type="Gene3D" id="3.30.1370.30">
    <property type="match status" value="1"/>
</dbReference>
<dbReference type="Gene3D" id="3.30.1490.10">
    <property type="match status" value="1"/>
</dbReference>
<dbReference type="HAMAP" id="MF_01302_B">
    <property type="entry name" value="Ribosomal_uS8_B"/>
    <property type="match status" value="1"/>
</dbReference>
<dbReference type="InterPro" id="IPR000630">
    <property type="entry name" value="Ribosomal_uS8"/>
</dbReference>
<dbReference type="InterPro" id="IPR047863">
    <property type="entry name" value="Ribosomal_uS8_CS"/>
</dbReference>
<dbReference type="InterPro" id="IPR035987">
    <property type="entry name" value="Ribosomal_uS8_sf"/>
</dbReference>
<dbReference type="NCBIfam" id="NF001109">
    <property type="entry name" value="PRK00136.1"/>
    <property type="match status" value="1"/>
</dbReference>
<dbReference type="PANTHER" id="PTHR11758">
    <property type="entry name" value="40S RIBOSOMAL PROTEIN S15A"/>
    <property type="match status" value="1"/>
</dbReference>
<dbReference type="Pfam" id="PF00410">
    <property type="entry name" value="Ribosomal_S8"/>
    <property type="match status" value="1"/>
</dbReference>
<dbReference type="SUPFAM" id="SSF56047">
    <property type="entry name" value="Ribosomal protein S8"/>
    <property type="match status" value="1"/>
</dbReference>
<dbReference type="PROSITE" id="PS00053">
    <property type="entry name" value="RIBOSOMAL_S8"/>
    <property type="match status" value="1"/>
</dbReference>